<feature type="chain" id="PRO_0000168727" description="Inner membrane protein YbiR">
    <location>
        <begin position="1"/>
        <end position="372"/>
    </location>
</feature>
<feature type="topological domain" description="Periplasmic" evidence="1">
    <location>
        <begin position="1"/>
        <end position="13"/>
    </location>
</feature>
<feature type="transmembrane region" description="Helical" evidence="1">
    <location>
        <begin position="14"/>
        <end position="34"/>
    </location>
</feature>
<feature type="transmembrane region" description="Helical" evidence="1">
    <location>
        <begin position="35"/>
        <end position="55"/>
    </location>
</feature>
<feature type="topological domain" description="Periplasmic" evidence="1">
    <location>
        <begin position="56"/>
        <end position="85"/>
    </location>
</feature>
<feature type="transmembrane region" description="Helical" evidence="1">
    <location>
        <begin position="86"/>
        <end position="106"/>
    </location>
</feature>
<feature type="topological domain" description="Cytoplasmic" evidence="1">
    <location>
        <begin position="107"/>
        <end position="122"/>
    </location>
</feature>
<feature type="transmembrane region" description="Helical" evidence="1">
    <location>
        <begin position="123"/>
        <end position="143"/>
    </location>
</feature>
<feature type="topological domain" description="Periplasmic" evidence="1">
    <location>
        <begin position="144"/>
        <end position="155"/>
    </location>
</feature>
<feature type="transmembrane region" description="Helical" evidence="1">
    <location>
        <begin position="156"/>
        <end position="176"/>
    </location>
</feature>
<feature type="topological domain" description="Cytoplasmic" evidence="1">
    <location>
        <begin position="177"/>
        <end position="208"/>
    </location>
</feature>
<feature type="transmembrane region" description="Helical" evidence="1">
    <location>
        <begin position="209"/>
        <end position="229"/>
    </location>
</feature>
<feature type="topological domain" description="Periplasmic" evidence="1">
    <location>
        <begin position="230"/>
        <end position="247"/>
    </location>
</feature>
<feature type="transmembrane region" description="Helical" evidence="1">
    <location>
        <begin position="248"/>
        <end position="268"/>
    </location>
</feature>
<feature type="topological domain" description="Cytoplasmic" evidence="1">
    <location>
        <begin position="269"/>
        <end position="283"/>
    </location>
</feature>
<feature type="transmembrane region" description="Helical" evidence="1">
    <location>
        <begin position="284"/>
        <end position="304"/>
    </location>
</feature>
<feature type="topological domain" description="Periplasmic" evidence="1">
    <location>
        <begin position="305"/>
        <end position="309"/>
    </location>
</feature>
<feature type="transmembrane region" description="Helical" evidence="1">
    <location>
        <begin position="310"/>
        <end position="330"/>
    </location>
</feature>
<feature type="topological domain" description="Cytoplasmic" evidence="1">
    <location>
        <begin position="331"/>
        <end position="348"/>
    </location>
</feature>
<feature type="transmembrane region" description="Helical" evidence="1">
    <location>
        <begin position="349"/>
        <end position="369"/>
    </location>
</feature>
<feature type="topological domain" description="Periplasmic" evidence="1">
    <location>
        <begin position="370"/>
        <end position="372"/>
    </location>
</feature>
<name>YBIR_ECOLI</name>
<sequence length="372" mass="41169">MSLPFLRTLQGDRFFQLLILVGIGLSFFVPFAPKSWPAAIDWHTIITLSGLMLLTKGVELSGYFDVLGRKMVRRFATERRLAMFMVLAAALLSTFLTNDVALFIVVPLTITLKRLCEIPVNRLIIFEALAVNAGSLLTPIGNPQNILIWGRSGLSFAGFIAQMAPLAGAMMLTLLLLCWCCFPGKAMQYHTGVQTPEWKPRLVWSCLGLYIVFLTALEFKQELWGLVIVAAGFALLARRVVLSVDWTLLLVFMAMFIDVHLLTQLPALQGVLGNVSHLSEPGLWLTAIGLSQVISNVPSTILLLNYVPPSLLLVWAVNVGGFGLLPGSLANLIALRMANDRRIWWRFHLYSIPMLLWAALVGYVLLVILPAN</sequence>
<comment type="subcellular location">
    <subcellularLocation>
        <location>Cell inner membrane</location>
        <topology>Multi-pass membrane protein</topology>
    </subcellularLocation>
</comment>
<comment type="similarity">
    <text evidence="2">Belongs to the CitM (TC 2.A.11) transporter family.</text>
</comment>
<protein>
    <recommendedName>
        <fullName>Inner membrane protein YbiR</fullName>
    </recommendedName>
</protein>
<evidence type="ECO:0000255" key="1"/>
<evidence type="ECO:0000305" key="2"/>
<accession>P75788</accession>
<accession>Q9R7R9</accession>
<organism>
    <name type="scientific">Escherichia coli (strain K12)</name>
    <dbReference type="NCBI Taxonomy" id="83333"/>
    <lineage>
        <taxon>Bacteria</taxon>
        <taxon>Pseudomonadati</taxon>
        <taxon>Pseudomonadota</taxon>
        <taxon>Gammaproteobacteria</taxon>
        <taxon>Enterobacterales</taxon>
        <taxon>Enterobacteriaceae</taxon>
        <taxon>Escherichia</taxon>
    </lineage>
</organism>
<dbReference type="EMBL" id="U00096">
    <property type="protein sequence ID" value="AAC73905.1"/>
    <property type="molecule type" value="Genomic_DNA"/>
</dbReference>
<dbReference type="EMBL" id="AP009048">
    <property type="protein sequence ID" value="BAA35499.1"/>
    <property type="molecule type" value="Genomic_DNA"/>
</dbReference>
<dbReference type="PIR" id="B64819">
    <property type="entry name" value="B64819"/>
</dbReference>
<dbReference type="RefSeq" id="NP_415339.1">
    <property type="nucleotide sequence ID" value="NC_000913.3"/>
</dbReference>
<dbReference type="RefSeq" id="WP_000056457.1">
    <property type="nucleotide sequence ID" value="NZ_SSZK01000002.1"/>
</dbReference>
<dbReference type="SMR" id="P75788"/>
<dbReference type="BioGRID" id="4261204">
    <property type="interactions" value="137"/>
</dbReference>
<dbReference type="FunCoup" id="P75788">
    <property type="interactions" value="62"/>
</dbReference>
<dbReference type="STRING" id="511145.b0818"/>
<dbReference type="TCDB" id="2.A.45.2.5">
    <property type="family name" value="the arsenite-antimonite (arsb) efflux family"/>
</dbReference>
<dbReference type="PaxDb" id="511145-b0818"/>
<dbReference type="EnsemblBacteria" id="AAC73905">
    <property type="protein sequence ID" value="AAC73905"/>
    <property type="gene ID" value="b0818"/>
</dbReference>
<dbReference type="GeneID" id="945438"/>
<dbReference type="KEGG" id="ecj:JW0802"/>
<dbReference type="KEGG" id="eco:b0818"/>
<dbReference type="KEGG" id="ecoc:C3026_05145"/>
<dbReference type="PATRIC" id="fig|1411691.4.peg.1460"/>
<dbReference type="EchoBASE" id="EB3107"/>
<dbReference type="eggNOG" id="COG1055">
    <property type="taxonomic scope" value="Bacteria"/>
</dbReference>
<dbReference type="HOGENOM" id="CLU_063025_1_0_6"/>
<dbReference type="InParanoid" id="P75788"/>
<dbReference type="OMA" id="IAMFIDV"/>
<dbReference type="OrthoDB" id="3177666at2"/>
<dbReference type="PhylomeDB" id="P75788"/>
<dbReference type="BioCyc" id="EcoCyc:G6421-MONOMER"/>
<dbReference type="PRO" id="PR:P75788"/>
<dbReference type="Proteomes" id="UP000000625">
    <property type="component" value="Chromosome"/>
</dbReference>
<dbReference type="GO" id="GO:0005886">
    <property type="term" value="C:plasma membrane"/>
    <property type="evidence" value="ECO:0000314"/>
    <property type="project" value="EcoCyc"/>
</dbReference>
<dbReference type="GO" id="GO:0055085">
    <property type="term" value="P:transmembrane transport"/>
    <property type="evidence" value="ECO:0007669"/>
    <property type="project" value="InterPro"/>
</dbReference>
<dbReference type="CDD" id="cd01117">
    <property type="entry name" value="YbiR_permease"/>
    <property type="match status" value="1"/>
</dbReference>
<dbReference type="InterPro" id="IPR004680">
    <property type="entry name" value="Cit_transptr-like_dom"/>
</dbReference>
<dbReference type="InterPro" id="IPR051475">
    <property type="entry name" value="Diverse_Ion_Transporter"/>
</dbReference>
<dbReference type="PANTHER" id="PTHR43568">
    <property type="entry name" value="P PROTEIN"/>
    <property type="match status" value="1"/>
</dbReference>
<dbReference type="PANTHER" id="PTHR43568:SF1">
    <property type="entry name" value="P PROTEIN"/>
    <property type="match status" value="1"/>
</dbReference>
<dbReference type="Pfam" id="PF03600">
    <property type="entry name" value="CitMHS"/>
    <property type="match status" value="1"/>
</dbReference>
<reference key="1">
    <citation type="journal article" date="1996" name="DNA Res.">
        <title>A 718-kb DNA sequence of the Escherichia coli K-12 genome corresponding to the 12.7-28.0 min region on the linkage map.</title>
        <authorList>
            <person name="Oshima T."/>
            <person name="Aiba H."/>
            <person name="Baba T."/>
            <person name="Fujita K."/>
            <person name="Hayashi K."/>
            <person name="Honjo A."/>
            <person name="Ikemoto K."/>
            <person name="Inada T."/>
            <person name="Itoh T."/>
            <person name="Kajihara M."/>
            <person name="Kanai K."/>
            <person name="Kashimoto K."/>
            <person name="Kimura S."/>
            <person name="Kitagawa M."/>
            <person name="Makino K."/>
            <person name="Masuda S."/>
            <person name="Miki T."/>
            <person name="Mizobuchi K."/>
            <person name="Mori H."/>
            <person name="Motomura K."/>
            <person name="Nakamura Y."/>
            <person name="Nashimoto H."/>
            <person name="Nishio Y."/>
            <person name="Saito N."/>
            <person name="Sampei G."/>
            <person name="Seki Y."/>
            <person name="Tagami H."/>
            <person name="Takemoto K."/>
            <person name="Wada C."/>
            <person name="Yamamoto Y."/>
            <person name="Yano M."/>
            <person name="Horiuchi T."/>
        </authorList>
    </citation>
    <scope>NUCLEOTIDE SEQUENCE [LARGE SCALE GENOMIC DNA]</scope>
    <source>
        <strain>K12 / W3110 / ATCC 27325 / DSM 5911</strain>
    </source>
</reference>
<reference key="2">
    <citation type="journal article" date="1997" name="Science">
        <title>The complete genome sequence of Escherichia coli K-12.</title>
        <authorList>
            <person name="Blattner F.R."/>
            <person name="Plunkett G. III"/>
            <person name="Bloch C.A."/>
            <person name="Perna N.T."/>
            <person name="Burland V."/>
            <person name="Riley M."/>
            <person name="Collado-Vides J."/>
            <person name="Glasner J.D."/>
            <person name="Rode C.K."/>
            <person name="Mayhew G.F."/>
            <person name="Gregor J."/>
            <person name="Davis N.W."/>
            <person name="Kirkpatrick H.A."/>
            <person name="Goeden M.A."/>
            <person name="Rose D.J."/>
            <person name="Mau B."/>
            <person name="Shao Y."/>
        </authorList>
    </citation>
    <scope>NUCLEOTIDE SEQUENCE [LARGE SCALE GENOMIC DNA]</scope>
    <source>
        <strain>K12 / MG1655 / ATCC 47076</strain>
    </source>
</reference>
<reference key="3">
    <citation type="journal article" date="2006" name="Mol. Syst. Biol.">
        <title>Highly accurate genome sequences of Escherichia coli K-12 strains MG1655 and W3110.</title>
        <authorList>
            <person name="Hayashi K."/>
            <person name="Morooka N."/>
            <person name="Yamamoto Y."/>
            <person name="Fujita K."/>
            <person name="Isono K."/>
            <person name="Choi S."/>
            <person name="Ohtsubo E."/>
            <person name="Baba T."/>
            <person name="Wanner B.L."/>
            <person name="Mori H."/>
            <person name="Horiuchi T."/>
        </authorList>
    </citation>
    <scope>NUCLEOTIDE SEQUENCE [LARGE SCALE GENOMIC DNA]</scope>
    <source>
        <strain>K12 / W3110 / ATCC 27325 / DSM 5911</strain>
    </source>
</reference>
<reference key="4">
    <citation type="journal article" date="2005" name="Science">
        <title>Global topology analysis of the Escherichia coli inner membrane proteome.</title>
        <authorList>
            <person name="Daley D.O."/>
            <person name="Rapp M."/>
            <person name="Granseth E."/>
            <person name="Melen K."/>
            <person name="Drew D."/>
            <person name="von Heijne G."/>
        </authorList>
    </citation>
    <scope>TOPOLOGY [LARGE SCALE ANALYSIS]</scope>
    <source>
        <strain>K12 / MG1655 / ATCC 47076</strain>
    </source>
</reference>
<proteinExistence type="evidence at protein level"/>
<gene>
    <name type="primary">ybiR</name>
    <name type="ordered locus">b0818</name>
    <name type="ordered locus">JW0802</name>
</gene>
<keyword id="KW-0997">Cell inner membrane</keyword>
<keyword id="KW-1003">Cell membrane</keyword>
<keyword id="KW-0472">Membrane</keyword>
<keyword id="KW-1185">Reference proteome</keyword>
<keyword id="KW-0812">Transmembrane</keyword>
<keyword id="KW-1133">Transmembrane helix</keyword>
<keyword id="KW-0813">Transport</keyword>